<reference key="1">
    <citation type="journal article" date="2005" name="Proc. Natl. Acad. Sci. U.S.A.">
        <title>Complete genome sequence of Vibrio fischeri: a symbiotic bacterium with pathogenic congeners.</title>
        <authorList>
            <person name="Ruby E.G."/>
            <person name="Urbanowski M."/>
            <person name="Campbell J."/>
            <person name="Dunn A."/>
            <person name="Faini M."/>
            <person name="Gunsalus R."/>
            <person name="Lostroh P."/>
            <person name="Lupp C."/>
            <person name="McCann J."/>
            <person name="Millikan D."/>
            <person name="Schaefer A."/>
            <person name="Stabb E."/>
            <person name="Stevens A."/>
            <person name="Visick K."/>
            <person name="Whistler C."/>
            <person name="Greenberg E.P."/>
        </authorList>
    </citation>
    <scope>NUCLEOTIDE SEQUENCE [LARGE SCALE GENOMIC DNA]</scope>
    <source>
        <strain>ATCC 700601 / ES114</strain>
    </source>
</reference>
<accession>Q5E0X3</accession>
<comment type="function">
    <text evidence="1">Cleaves the N-terminal amino acid of tripeptides.</text>
</comment>
<comment type="catalytic activity">
    <reaction evidence="1">
        <text>Release of the N-terminal residue from a tripeptide.</text>
        <dbReference type="EC" id="3.4.11.4"/>
    </reaction>
</comment>
<comment type="cofactor">
    <cofactor evidence="1">
        <name>Zn(2+)</name>
        <dbReference type="ChEBI" id="CHEBI:29105"/>
    </cofactor>
    <text evidence="1">Binds 2 Zn(2+) ions per subunit.</text>
</comment>
<comment type="subcellular location">
    <subcellularLocation>
        <location evidence="1">Cytoplasm</location>
    </subcellularLocation>
</comment>
<comment type="similarity">
    <text evidence="1">Belongs to the peptidase M20B family.</text>
</comment>
<organism>
    <name type="scientific">Aliivibrio fischeri (strain ATCC 700601 / ES114)</name>
    <name type="common">Vibrio fischeri</name>
    <dbReference type="NCBI Taxonomy" id="312309"/>
    <lineage>
        <taxon>Bacteria</taxon>
        <taxon>Pseudomonadati</taxon>
        <taxon>Pseudomonadota</taxon>
        <taxon>Gammaproteobacteria</taxon>
        <taxon>Vibrionales</taxon>
        <taxon>Vibrionaceae</taxon>
        <taxon>Aliivibrio</taxon>
    </lineage>
</organism>
<proteinExistence type="inferred from homology"/>
<protein>
    <recommendedName>
        <fullName evidence="1">Peptidase T</fullName>
        <ecNumber evidence="1">3.4.11.4</ecNumber>
    </recommendedName>
    <alternativeName>
        <fullName evidence="1">Aminotripeptidase</fullName>
        <shortName evidence="1">Tripeptidase</shortName>
    </alternativeName>
    <alternativeName>
        <fullName evidence="1">Tripeptide aminopeptidase</fullName>
    </alternativeName>
</protein>
<feature type="chain" id="PRO_0000185331" description="Peptidase T">
    <location>
        <begin position="1"/>
        <end position="409"/>
    </location>
</feature>
<feature type="active site" evidence="1">
    <location>
        <position position="80"/>
    </location>
</feature>
<feature type="active site" description="Proton acceptor" evidence="1">
    <location>
        <position position="174"/>
    </location>
</feature>
<feature type="binding site" evidence="1">
    <location>
        <position position="78"/>
    </location>
    <ligand>
        <name>Zn(2+)</name>
        <dbReference type="ChEBI" id="CHEBI:29105"/>
        <label>1</label>
    </ligand>
</feature>
<feature type="binding site" evidence="1">
    <location>
        <position position="140"/>
    </location>
    <ligand>
        <name>Zn(2+)</name>
        <dbReference type="ChEBI" id="CHEBI:29105"/>
        <label>1</label>
    </ligand>
</feature>
<feature type="binding site" evidence="1">
    <location>
        <position position="140"/>
    </location>
    <ligand>
        <name>Zn(2+)</name>
        <dbReference type="ChEBI" id="CHEBI:29105"/>
        <label>2</label>
    </ligand>
</feature>
<feature type="binding site" evidence="1">
    <location>
        <position position="175"/>
    </location>
    <ligand>
        <name>Zn(2+)</name>
        <dbReference type="ChEBI" id="CHEBI:29105"/>
        <label>2</label>
    </ligand>
</feature>
<feature type="binding site" evidence="1">
    <location>
        <position position="197"/>
    </location>
    <ligand>
        <name>Zn(2+)</name>
        <dbReference type="ChEBI" id="CHEBI:29105"/>
        <label>1</label>
    </ligand>
</feature>
<feature type="binding site" evidence="1">
    <location>
        <position position="379"/>
    </location>
    <ligand>
        <name>Zn(2+)</name>
        <dbReference type="ChEBI" id="CHEBI:29105"/>
        <label>2</label>
    </ligand>
</feature>
<sequence>MKDLVERFLSYVSIDTQSNPSAPQCPSTEKQFNLANQLVSELNELELSDVSIDENGYVMGRLPSNVDYDVPAIGFIAHMDTAPDASGENVKPQIINNYQGDIITLGTSGEELTPSQFPDLLNLIGHDLITTDGTTLLGADNKAGIAEILTAIAVLKANPEIPHGDICVGFTPDEEIGRGANLFDVKKFNAKWAYTIDGGPVGELEYENFNATSADVICHGVNVHPGTAKGKMVNSMNIAAQFQMMMPADETPEGTEGYEGFYHLKSMNAGVAKTELGYIVRDFSREGMAERKAFMQQKVNELNAKLEKGRVELVLTDSYFNMREMVEPHPHVIELAKEAMTACDIQPDIKPIRGGTDGARLSFMGLPCPNIFTGGYNFHGIHEFITINGMKQAVDVIVKIAELNASNNK</sequence>
<dbReference type="EC" id="3.4.11.4" evidence="1"/>
<dbReference type="EMBL" id="CP000021">
    <property type="protein sequence ID" value="AAW87323.1"/>
    <property type="molecule type" value="Genomic_DNA"/>
</dbReference>
<dbReference type="RefSeq" id="WP_011263146.1">
    <property type="nucleotide sequence ID" value="NC_006841.2"/>
</dbReference>
<dbReference type="RefSeq" id="YP_206211.1">
    <property type="nucleotide sequence ID" value="NC_006841.2"/>
</dbReference>
<dbReference type="SMR" id="Q5E0X3"/>
<dbReference type="STRING" id="312309.VF_A0253"/>
<dbReference type="MEROPS" id="M20.003"/>
<dbReference type="EnsemblBacteria" id="AAW87323">
    <property type="protein sequence ID" value="AAW87323"/>
    <property type="gene ID" value="VF_A0253"/>
</dbReference>
<dbReference type="GeneID" id="54165574"/>
<dbReference type="KEGG" id="vfi:VF_A0253"/>
<dbReference type="PATRIC" id="fig|312309.11.peg.2856"/>
<dbReference type="eggNOG" id="COG2195">
    <property type="taxonomic scope" value="Bacteria"/>
</dbReference>
<dbReference type="HOGENOM" id="CLU_053676_0_0_6"/>
<dbReference type="OrthoDB" id="9804934at2"/>
<dbReference type="Proteomes" id="UP000000537">
    <property type="component" value="Chromosome II"/>
</dbReference>
<dbReference type="GO" id="GO:0005829">
    <property type="term" value="C:cytosol"/>
    <property type="evidence" value="ECO:0007669"/>
    <property type="project" value="TreeGrafter"/>
</dbReference>
<dbReference type="GO" id="GO:0008237">
    <property type="term" value="F:metallopeptidase activity"/>
    <property type="evidence" value="ECO:0007669"/>
    <property type="project" value="UniProtKB-KW"/>
</dbReference>
<dbReference type="GO" id="GO:0045148">
    <property type="term" value="F:tripeptide aminopeptidase activity"/>
    <property type="evidence" value="ECO:0007669"/>
    <property type="project" value="UniProtKB-UniRule"/>
</dbReference>
<dbReference type="GO" id="GO:0008270">
    <property type="term" value="F:zinc ion binding"/>
    <property type="evidence" value="ECO:0007669"/>
    <property type="project" value="UniProtKB-UniRule"/>
</dbReference>
<dbReference type="GO" id="GO:0043171">
    <property type="term" value="P:peptide catabolic process"/>
    <property type="evidence" value="ECO:0007669"/>
    <property type="project" value="UniProtKB-UniRule"/>
</dbReference>
<dbReference type="GO" id="GO:0006508">
    <property type="term" value="P:proteolysis"/>
    <property type="evidence" value="ECO:0007669"/>
    <property type="project" value="UniProtKB-UniRule"/>
</dbReference>
<dbReference type="CDD" id="cd03892">
    <property type="entry name" value="M20_peptT"/>
    <property type="match status" value="1"/>
</dbReference>
<dbReference type="Gene3D" id="3.30.70.360">
    <property type="match status" value="1"/>
</dbReference>
<dbReference type="Gene3D" id="3.40.630.10">
    <property type="entry name" value="Zn peptidases"/>
    <property type="match status" value="1"/>
</dbReference>
<dbReference type="HAMAP" id="MF_00550">
    <property type="entry name" value="Aminopeptidase_M20"/>
    <property type="match status" value="1"/>
</dbReference>
<dbReference type="InterPro" id="IPR001261">
    <property type="entry name" value="ArgE/DapE_CS"/>
</dbReference>
<dbReference type="InterPro" id="IPR036264">
    <property type="entry name" value="Bact_exopeptidase_dim_dom"/>
</dbReference>
<dbReference type="InterPro" id="IPR002933">
    <property type="entry name" value="Peptidase_M20"/>
</dbReference>
<dbReference type="InterPro" id="IPR011650">
    <property type="entry name" value="Peptidase_M20_dimer"/>
</dbReference>
<dbReference type="InterPro" id="IPR010161">
    <property type="entry name" value="Peptidase_M20B"/>
</dbReference>
<dbReference type="NCBIfam" id="TIGR01882">
    <property type="entry name" value="peptidase-T"/>
    <property type="match status" value="1"/>
</dbReference>
<dbReference type="NCBIfam" id="NF003976">
    <property type="entry name" value="PRK05469.1"/>
    <property type="match status" value="1"/>
</dbReference>
<dbReference type="NCBIfam" id="NF009920">
    <property type="entry name" value="PRK13381.1"/>
    <property type="match status" value="1"/>
</dbReference>
<dbReference type="PANTHER" id="PTHR42994">
    <property type="entry name" value="PEPTIDASE T"/>
    <property type="match status" value="1"/>
</dbReference>
<dbReference type="PANTHER" id="PTHR42994:SF1">
    <property type="entry name" value="PEPTIDASE T"/>
    <property type="match status" value="1"/>
</dbReference>
<dbReference type="Pfam" id="PF07687">
    <property type="entry name" value="M20_dimer"/>
    <property type="match status" value="1"/>
</dbReference>
<dbReference type="Pfam" id="PF01546">
    <property type="entry name" value="Peptidase_M20"/>
    <property type="match status" value="1"/>
</dbReference>
<dbReference type="PIRSF" id="PIRSF037215">
    <property type="entry name" value="Peptidase_M20B"/>
    <property type="match status" value="1"/>
</dbReference>
<dbReference type="SUPFAM" id="SSF55031">
    <property type="entry name" value="Bacterial exopeptidase dimerisation domain"/>
    <property type="match status" value="1"/>
</dbReference>
<dbReference type="SUPFAM" id="SSF53187">
    <property type="entry name" value="Zn-dependent exopeptidases"/>
    <property type="match status" value="1"/>
</dbReference>
<dbReference type="PROSITE" id="PS00758">
    <property type="entry name" value="ARGE_DAPE_CPG2_1"/>
    <property type="match status" value="1"/>
</dbReference>
<dbReference type="PROSITE" id="PS00759">
    <property type="entry name" value="ARGE_DAPE_CPG2_2"/>
    <property type="match status" value="1"/>
</dbReference>
<evidence type="ECO:0000255" key="1">
    <source>
        <dbReference type="HAMAP-Rule" id="MF_00550"/>
    </source>
</evidence>
<name>PEPT_ALIF1</name>
<keyword id="KW-0031">Aminopeptidase</keyword>
<keyword id="KW-0963">Cytoplasm</keyword>
<keyword id="KW-0378">Hydrolase</keyword>
<keyword id="KW-0479">Metal-binding</keyword>
<keyword id="KW-0482">Metalloprotease</keyword>
<keyword id="KW-0645">Protease</keyword>
<keyword id="KW-1185">Reference proteome</keyword>
<keyword id="KW-0862">Zinc</keyword>
<gene>
    <name evidence="1" type="primary">pepT</name>
    <name type="ordered locus">VF_A0253</name>
</gene>